<keyword id="KW-0507">mRNA processing</keyword>
<keyword id="KW-0508">mRNA splicing</keyword>
<keyword id="KW-0539">Nucleus</keyword>
<keyword id="KW-1185">Reference proteome</keyword>
<keyword id="KW-0677">Repeat</keyword>
<keyword id="KW-0747">Spliceosome</keyword>
<proteinExistence type="inferred from homology"/>
<gene>
    <name type="primary">syf1</name>
    <name type="ORF">AN0111</name>
</gene>
<accession>Q5BH69</accession>
<accession>C8VQL5</accession>
<feature type="chain" id="PRO_0000205730" description="Pre-mRNA-splicing factor syf1">
    <location>
        <begin position="1"/>
        <end position="851"/>
    </location>
</feature>
<feature type="repeat" description="HAT 1">
    <location>
        <begin position="12"/>
        <end position="44"/>
    </location>
</feature>
<feature type="repeat" description="HAT 2">
    <location>
        <begin position="63"/>
        <end position="95"/>
    </location>
</feature>
<feature type="repeat" description="HAT 3">
    <location>
        <begin position="107"/>
        <end position="139"/>
    </location>
</feature>
<feature type="repeat" description="HAT 4">
    <location>
        <begin position="141"/>
        <end position="175"/>
    </location>
</feature>
<feature type="repeat" description="HAT 5">
    <location>
        <begin position="291"/>
        <end position="326"/>
    </location>
</feature>
<feature type="repeat" description="HAT 6">
    <location>
        <begin position="398"/>
        <end position="432"/>
    </location>
</feature>
<feature type="repeat" description="HAT 7">
    <location>
        <begin position="434"/>
        <end position="470"/>
    </location>
</feature>
<feature type="repeat" description="HAT 8">
    <location>
        <begin position="487"/>
        <end position="519"/>
    </location>
</feature>
<feature type="repeat" description="HAT 9">
    <location>
        <begin position="558"/>
        <end position="592"/>
    </location>
</feature>
<feature type="repeat" description="HAT 10">
    <location>
        <begin position="595"/>
        <end position="629"/>
    </location>
</feature>
<feature type="repeat" description="HAT 11">
    <location>
        <begin position="667"/>
        <end position="701"/>
    </location>
</feature>
<feature type="repeat" description="HAT 12">
    <location>
        <begin position="703"/>
        <end position="737"/>
    </location>
</feature>
<feature type="region of interest" description="Disordered" evidence="2">
    <location>
        <begin position="771"/>
        <end position="793"/>
    </location>
</feature>
<feature type="region of interest" description="Disordered" evidence="2">
    <location>
        <begin position="810"/>
        <end position="851"/>
    </location>
</feature>
<feature type="compositionally biased region" description="Low complexity" evidence="2">
    <location>
        <begin position="825"/>
        <end position="841"/>
    </location>
</feature>
<feature type="compositionally biased region" description="Acidic residues" evidence="2">
    <location>
        <begin position="842"/>
        <end position="851"/>
    </location>
</feature>
<reference key="1">
    <citation type="journal article" date="2005" name="Nature">
        <title>Sequencing of Aspergillus nidulans and comparative analysis with A. fumigatus and A. oryzae.</title>
        <authorList>
            <person name="Galagan J.E."/>
            <person name="Calvo S.E."/>
            <person name="Cuomo C."/>
            <person name="Ma L.-J."/>
            <person name="Wortman J.R."/>
            <person name="Batzoglou S."/>
            <person name="Lee S.-I."/>
            <person name="Bastuerkmen M."/>
            <person name="Spevak C.C."/>
            <person name="Clutterbuck J."/>
            <person name="Kapitonov V."/>
            <person name="Jurka J."/>
            <person name="Scazzocchio C."/>
            <person name="Farman M.L."/>
            <person name="Butler J."/>
            <person name="Purcell S."/>
            <person name="Harris S."/>
            <person name="Braus G.H."/>
            <person name="Draht O."/>
            <person name="Busch S."/>
            <person name="D'Enfert C."/>
            <person name="Bouchier C."/>
            <person name="Goldman G.H."/>
            <person name="Bell-Pedersen D."/>
            <person name="Griffiths-Jones S."/>
            <person name="Doonan J.H."/>
            <person name="Yu J."/>
            <person name="Vienken K."/>
            <person name="Pain A."/>
            <person name="Freitag M."/>
            <person name="Selker E.U."/>
            <person name="Archer D.B."/>
            <person name="Penalva M.A."/>
            <person name="Oakley B.R."/>
            <person name="Momany M."/>
            <person name="Tanaka T."/>
            <person name="Kumagai T."/>
            <person name="Asai K."/>
            <person name="Machida M."/>
            <person name="Nierman W.C."/>
            <person name="Denning D.W."/>
            <person name="Caddick M.X."/>
            <person name="Hynes M."/>
            <person name="Paoletti M."/>
            <person name="Fischer R."/>
            <person name="Miller B.L."/>
            <person name="Dyer P.S."/>
            <person name="Sachs M.S."/>
            <person name="Osmani S.A."/>
            <person name="Birren B.W."/>
        </authorList>
    </citation>
    <scope>NUCLEOTIDE SEQUENCE [LARGE SCALE GENOMIC DNA]</scope>
    <source>
        <strain>FGSC A4 / ATCC 38163 / CBS 112.46 / NRRL 194 / M139</strain>
    </source>
</reference>
<reference key="2">
    <citation type="journal article" date="2009" name="Fungal Genet. Biol.">
        <title>The 2008 update of the Aspergillus nidulans genome annotation: a community effort.</title>
        <authorList>
            <person name="Wortman J.R."/>
            <person name="Gilsenan J.M."/>
            <person name="Joardar V."/>
            <person name="Deegan J."/>
            <person name="Clutterbuck J."/>
            <person name="Andersen M.R."/>
            <person name="Archer D."/>
            <person name="Bencina M."/>
            <person name="Braus G."/>
            <person name="Coutinho P."/>
            <person name="von Dohren H."/>
            <person name="Doonan J."/>
            <person name="Driessen A.J."/>
            <person name="Durek P."/>
            <person name="Espeso E."/>
            <person name="Fekete E."/>
            <person name="Flipphi M."/>
            <person name="Estrada C.G."/>
            <person name="Geysens S."/>
            <person name="Goldman G."/>
            <person name="de Groot P.W."/>
            <person name="Hansen K."/>
            <person name="Harris S.D."/>
            <person name="Heinekamp T."/>
            <person name="Helmstaedt K."/>
            <person name="Henrissat B."/>
            <person name="Hofmann G."/>
            <person name="Homan T."/>
            <person name="Horio T."/>
            <person name="Horiuchi H."/>
            <person name="James S."/>
            <person name="Jones M."/>
            <person name="Karaffa L."/>
            <person name="Karanyi Z."/>
            <person name="Kato M."/>
            <person name="Keller N."/>
            <person name="Kelly D.E."/>
            <person name="Kiel J.A."/>
            <person name="Kim J.M."/>
            <person name="van der Klei I.J."/>
            <person name="Klis F.M."/>
            <person name="Kovalchuk A."/>
            <person name="Krasevec N."/>
            <person name="Kubicek C.P."/>
            <person name="Liu B."/>
            <person name="Maccabe A."/>
            <person name="Meyer V."/>
            <person name="Mirabito P."/>
            <person name="Miskei M."/>
            <person name="Mos M."/>
            <person name="Mullins J."/>
            <person name="Nelson D.R."/>
            <person name="Nielsen J."/>
            <person name="Oakley B.R."/>
            <person name="Osmani S.A."/>
            <person name="Pakula T."/>
            <person name="Paszewski A."/>
            <person name="Paulsen I."/>
            <person name="Pilsyk S."/>
            <person name="Pocsi I."/>
            <person name="Punt P.J."/>
            <person name="Ram A.F."/>
            <person name="Ren Q."/>
            <person name="Robellet X."/>
            <person name="Robson G."/>
            <person name="Seiboth B."/>
            <person name="van Solingen P."/>
            <person name="Specht T."/>
            <person name="Sun J."/>
            <person name="Taheri-Talesh N."/>
            <person name="Takeshita N."/>
            <person name="Ussery D."/>
            <person name="vanKuyk P.A."/>
            <person name="Visser H."/>
            <person name="van de Vondervoort P.J."/>
            <person name="de Vries R.P."/>
            <person name="Walton J."/>
            <person name="Xiang X."/>
            <person name="Xiong Y."/>
            <person name="Zeng A.P."/>
            <person name="Brandt B.W."/>
            <person name="Cornell M.J."/>
            <person name="van den Hondel C.A."/>
            <person name="Visser J."/>
            <person name="Oliver S.G."/>
            <person name="Turner G."/>
        </authorList>
    </citation>
    <scope>GENOME REANNOTATION</scope>
    <source>
        <strain>FGSC A4 / ATCC 38163 / CBS 112.46 / NRRL 194 / M139</strain>
    </source>
</reference>
<dbReference type="EMBL" id="AACD01000004">
    <property type="protein sequence ID" value="EAA65289.1"/>
    <property type="molecule type" value="Genomic_DNA"/>
</dbReference>
<dbReference type="EMBL" id="BN001308">
    <property type="protein sequence ID" value="CBF90179.1"/>
    <property type="molecule type" value="Genomic_DNA"/>
</dbReference>
<dbReference type="RefSeq" id="XP_657715.1">
    <property type="nucleotide sequence ID" value="XM_652623.1"/>
</dbReference>
<dbReference type="SMR" id="Q5BH69"/>
<dbReference type="FunCoup" id="Q5BH69">
    <property type="interactions" value="1022"/>
</dbReference>
<dbReference type="STRING" id="227321.Q5BH69"/>
<dbReference type="EnsemblFungi" id="CBF90179">
    <property type="protein sequence ID" value="CBF90179"/>
    <property type="gene ID" value="ANIA_00111"/>
</dbReference>
<dbReference type="KEGG" id="ani:ANIA_00111"/>
<dbReference type="eggNOG" id="KOG2047">
    <property type="taxonomic scope" value="Eukaryota"/>
</dbReference>
<dbReference type="HOGENOM" id="CLU_007736_0_0_1"/>
<dbReference type="InParanoid" id="Q5BH69"/>
<dbReference type="OMA" id="IWYNYLR"/>
<dbReference type="OrthoDB" id="10067343at2759"/>
<dbReference type="Proteomes" id="UP000000560">
    <property type="component" value="Chromosome VIII"/>
</dbReference>
<dbReference type="GO" id="GO:0071014">
    <property type="term" value="C:post-mRNA release spliceosomal complex"/>
    <property type="evidence" value="ECO:0000318"/>
    <property type="project" value="GO_Central"/>
</dbReference>
<dbReference type="GO" id="GO:0000974">
    <property type="term" value="C:Prp19 complex"/>
    <property type="evidence" value="ECO:0000318"/>
    <property type="project" value="GO_Central"/>
</dbReference>
<dbReference type="GO" id="GO:0071007">
    <property type="term" value="C:U2-type catalytic step 2 spliceosome"/>
    <property type="evidence" value="ECO:0000318"/>
    <property type="project" value="GO_Central"/>
</dbReference>
<dbReference type="GO" id="GO:0000349">
    <property type="term" value="P:generation of catalytic spliceosome for first transesterification step"/>
    <property type="evidence" value="ECO:0000318"/>
    <property type="project" value="GO_Central"/>
</dbReference>
<dbReference type="GO" id="GO:0000398">
    <property type="term" value="P:mRNA splicing, via spliceosome"/>
    <property type="evidence" value="ECO:0000318"/>
    <property type="project" value="GO_Central"/>
</dbReference>
<dbReference type="FunFam" id="1.25.40.10:FF:000666">
    <property type="entry name" value="DNA repair and transcription protein (Xab2)"/>
    <property type="match status" value="1"/>
</dbReference>
<dbReference type="FunFam" id="1.25.40.10:FF:000023">
    <property type="entry name" value="Pre-mRNA-splicing factor SYF1"/>
    <property type="match status" value="1"/>
</dbReference>
<dbReference type="FunFam" id="1.25.40.10:FF:000038">
    <property type="entry name" value="Putative pre-mRNA-splicing factor SYF1"/>
    <property type="match status" value="1"/>
</dbReference>
<dbReference type="Gene3D" id="1.25.40.10">
    <property type="entry name" value="Tetratricopeptide repeat domain"/>
    <property type="match status" value="5"/>
</dbReference>
<dbReference type="InterPro" id="IPR003107">
    <property type="entry name" value="HAT"/>
</dbReference>
<dbReference type="InterPro" id="IPR055433">
    <property type="entry name" value="HAT_Syf1-like_N"/>
</dbReference>
<dbReference type="InterPro" id="IPR056350">
    <property type="entry name" value="HAT_Syf1_central"/>
</dbReference>
<dbReference type="InterPro" id="IPR055430">
    <property type="entry name" value="HAT_Syf1_CNRKL1_C"/>
</dbReference>
<dbReference type="InterPro" id="IPR045075">
    <property type="entry name" value="Syf1-like"/>
</dbReference>
<dbReference type="InterPro" id="IPR011990">
    <property type="entry name" value="TPR-like_helical_dom_sf"/>
</dbReference>
<dbReference type="PANTHER" id="PTHR11246">
    <property type="entry name" value="PRE-MRNA SPLICING FACTOR"/>
    <property type="match status" value="1"/>
</dbReference>
<dbReference type="PANTHER" id="PTHR11246:SF5">
    <property type="entry name" value="PRE-MRNA-SPLICING FACTOR SYF1"/>
    <property type="match status" value="1"/>
</dbReference>
<dbReference type="Pfam" id="PF23231">
    <property type="entry name" value="HAT_Syf1_CNRKL1_C"/>
    <property type="match status" value="1"/>
</dbReference>
<dbReference type="Pfam" id="PF23233">
    <property type="entry name" value="HAT_Syf1_CNRKL1_N"/>
    <property type="match status" value="1"/>
</dbReference>
<dbReference type="Pfam" id="PF23220">
    <property type="entry name" value="HAT_Syf1_M"/>
    <property type="match status" value="1"/>
</dbReference>
<dbReference type="SMART" id="SM00386">
    <property type="entry name" value="HAT"/>
    <property type="match status" value="11"/>
</dbReference>
<dbReference type="SUPFAM" id="SSF48452">
    <property type="entry name" value="TPR-like"/>
    <property type="match status" value="3"/>
</dbReference>
<protein>
    <recommendedName>
        <fullName>Pre-mRNA-splicing factor syf1</fullName>
    </recommendedName>
</protein>
<sequence length="851" mass="98616">MDRSSASRPDLYLIADNDSVYEQDLLRNPGTIKPWLAYIEYKQQNGTLYEQAFVGRPLDALIISILNDFQVMERACKQLPRSYKLWKMYLEFRTKHLKNRNAIKYRAEFQKVNTLFERALILLNKMPRIWEMYLTFMLQQPLVTQTRRTFDRALRALPVTQHNRIWKLYKTFARSASGQTAVKIWARYMQIHPENAEEYINLLVEMGHYTDAIKRYMEILDNPRFQSREGKSNFQLWTEMVDLLVSKAKKIETGPQTGIDVDAILRSGIDRFADQRGKLWAGLATYWITKGNFEKARDVFEEGITTVMTVRDFTLIFDSYVEFEESIIGSLMEAAAVRADNGKADEEADFDLDLRMLRFEQLMDRRPFLVNDVLLRQNPNNVIEWEKRVALWGDNNVEIVNTYTAAIAAINPKKAVGKFSELWVNYAKFYERGGDLDTARIIFEKAVKVPFKSVNELAETWCEWAEMELRSENFDKAVEIMAKATQAPKKSTVDYFDETLSPQQRIHKSWKLWSFYVDLVESVSSIEETKKVYERIFELRIATPQTVVNYANLLEEHKYFEESFKVYERGLDLFTYPVAFELWNLYLTKAVDRKIGIERLRDLFEQALDGCPPKFARPLYLMYGNLEEERGLARHAMRIYERATRAVSDEDRFEMFEFYITKSASNFGLPSTRPIYERAIAALPDHEAKEMCLKFAEMERRLGEIDRARAIYGHASQFCDPRTNAPFWQKWEAFEVQHGNEDTFKEMLRIKRSVQAQYNTDVNFIASQAIARSQQRAPEGEEATAAAEREMDTETTDAMAALERQARAPIGFVAASTGPEGGNRAPPAGQGPVAAPANPDAIDLDDDMEAD</sequence>
<name>SYF1_EMENI</name>
<comment type="function">
    <text evidence="1">Involved in pre-mRNA splicing and cell cycle progression.</text>
</comment>
<comment type="subunit">
    <text evidence="1">Associated with the spliceosome.</text>
</comment>
<comment type="subcellular location">
    <subcellularLocation>
        <location evidence="1">Nucleus</location>
    </subcellularLocation>
</comment>
<comment type="similarity">
    <text evidence="3">Belongs to the crooked-neck family.</text>
</comment>
<organism>
    <name type="scientific">Emericella nidulans (strain FGSC A4 / ATCC 38163 / CBS 112.46 / NRRL 194 / M139)</name>
    <name type="common">Aspergillus nidulans</name>
    <dbReference type="NCBI Taxonomy" id="227321"/>
    <lineage>
        <taxon>Eukaryota</taxon>
        <taxon>Fungi</taxon>
        <taxon>Dikarya</taxon>
        <taxon>Ascomycota</taxon>
        <taxon>Pezizomycotina</taxon>
        <taxon>Eurotiomycetes</taxon>
        <taxon>Eurotiomycetidae</taxon>
        <taxon>Eurotiales</taxon>
        <taxon>Aspergillaceae</taxon>
        <taxon>Aspergillus</taxon>
        <taxon>Aspergillus subgen. Nidulantes</taxon>
    </lineage>
</organism>
<evidence type="ECO:0000250" key="1"/>
<evidence type="ECO:0000256" key="2">
    <source>
        <dbReference type="SAM" id="MobiDB-lite"/>
    </source>
</evidence>
<evidence type="ECO:0000305" key="3"/>